<evidence type="ECO:0000255" key="1">
    <source>
        <dbReference type="HAMAP-Rule" id="MF_00154"/>
    </source>
</evidence>
<accession>A5VD56</accession>
<name>COXX_RHIWR</name>
<dbReference type="EC" id="2.5.1.141" evidence="1"/>
<dbReference type="EMBL" id="CP000699">
    <property type="protein sequence ID" value="ABQ70222.1"/>
    <property type="molecule type" value="Genomic_DNA"/>
</dbReference>
<dbReference type="SMR" id="A5VD56"/>
<dbReference type="STRING" id="392499.Swit_3877"/>
<dbReference type="PaxDb" id="392499-Swit_3877"/>
<dbReference type="KEGG" id="swi:Swit_3877"/>
<dbReference type="eggNOG" id="COG0109">
    <property type="taxonomic scope" value="Bacteria"/>
</dbReference>
<dbReference type="HOGENOM" id="CLU_029631_0_2_5"/>
<dbReference type="OrthoDB" id="9814417at2"/>
<dbReference type="UniPathway" id="UPA00834">
    <property type="reaction ID" value="UER00712"/>
</dbReference>
<dbReference type="Proteomes" id="UP000001989">
    <property type="component" value="Chromosome"/>
</dbReference>
<dbReference type="GO" id="GO:0005886">
    <property type="term" value="C:plasma membrane"/>
    <property type="evidence" value="ECO:0007669"/>
    <property type="project" value="UniProtKB-SubCell"/>
</dbReference>
<dbReference type="GO" id="GO:0008495">
    <property type="term" value="F:protoheme IX farnesyltransferase activity"/>
    <property type="evidence" value="ECO:0007669"/>
    <property type="project" value="UniProtKB-UniRule"/>
</dbReference>
<dbReference type="GO" id="GO:0048034">
    <property type="term" value="P:heme O biosynthetic process"/>
    <property type="evidence" value="ECO:0007669"/>
    <property type="project" value="UniProtKB-UniRule"/>
</dbReference>
<dbReference type="CDD" id="cd13957">
    <property type="entry name" value="PT_UbiA_Cox10"/>
    <property type="match status" value="1"/>
</dbReference>
<dbReference type="Gene3D" id="1.10.357.140">
    <property type="entry name" value="UbiA prenyltransferase"/>
    <property type="match status" value="1"/>
</dbReference>
<dbReference type="HAMAP" id="MF_00154">
    <property type="entry name" value="CyoE_CtaB"/>
    <property type="match status" value="1"/>
</dbReference>
<dbReference type="InterPro" id="IPR006369">
    <property type="entry name" value="Protohaem_IX_farnesylTrfase"/>
</dbReference>
<dbReference type="InterPro" id="IPR000537">
    <property type="entry name" value="UbiA_prenyltransferase"/>
</dbReference>
<dbReference type="InterPro" id="IPR030470">
    <property type="entry name" value="UbiA_prenylTrfase_CS"/>
</dbReference>
<dbReference type="InterPro" id="IPR044878">
    <property type="entry name" value="UbiA_sf"/>
</dbReference>
<dbReference type="NCBIfam" id="TIGR01473">
    <property type="entry name" value="cyoE_ctaB"/>
    <property type="match status" value="1"/>
</dbReference>
<dbReference type="NCBIfam" id="NF003349">
    <property type="entry name" value="PRK04375.1-2"/>
    <property type="match status" value="1"/>
</dbReference>
<dbReference type="PANTHER" id="PTHR43448:SF7">
    <property type="entry name" value="4-HYDROXYBENZOATE SOLANESYLTRANSFERASE"/>
    <property type="match status" value="1"/>
</dbReference>
<dbReference type="PANTHER" id="PTHR43448">
    <property type="entry name" value="PROTOHEME IX FARNESYLTRANSFERASE, MITOCHONDRIAL"/>
    <property type="match status" value="1"/>
</dbReference>
<dbReference type="Pfam" id="PF01040">
    <property type="entry name" value="UbiA"/>
    <property type="match status" value="1"/>
</dbReference>
<dbReference type="PROSITE" id="PS00943">
    <property type="entry name" value="UBIA"/>
    <property type="match status" value="1"/>
</dbReference>
<proteinExistence type="inferred from homology"/>
<comment type="function">
    <text evidence="1">Converts heme B (protoheme IX) to heme O by substitution of the vinyl group on carbon 2 of heme B porphyrin ring with a hydroxyethyl farnesyl side group.</text>
</comment>
<comment type="catalytic activity">
    <reaction evidence="1">
        <text>heme b + (2E,6E)-farnesyl diphosphate + H2O = Fe(II)-heme o + diphosphate</text>
        <dbReference type="Rhea" id="RHEA:28070"/>
        <dbReference type="ChEBI" id="CHEBI:15377"/>
        <dbReference type="ChEBI" id="CHEBI:33019"/>
        <dbReference type="ChEBI" id="CHEBI:60344"/>
        <dbReference type="ChEBI" id="CHEBI:60530"/>
        <dbReference type="ChEBI" id="CHEBI:175763"/>
        <dbReference type="EC" id="2.5.1.141"/>
    </reaction>
</comment>
<comment type="pathway">
    <text evidence="1">Porphyrin-containing compound metabolism; heme O biosynthesis; heme O from protoheme: step 1/1.</text>
</comment>
<comment type="subcellular location">
    <subcellularLocation>
        <location evidence="1">Cell inner membrane</location>
        <topology evidence="1">Multi-pass membrane protein</topology>
    </subcellularLocation>
</comment>
<comment type="miscellaneous">
    <text evidence="1">Carbon 2 of the heme B porphyrin ring is defined according to the Fischer nomenclature.</text>
</comment>
<comment type="similarity">
    <text evidence="1">Belongs to the UbiA prenyltransferase family. Protoheme IX farnesyltransferase subfamily.</text>
</comment>
<sequence length="302" mass="32133">MASKAHPVATTAAADWRDFLALTKPRVLTLVVFTGWCGLLAAPQSIHPVLGFTAVLCIALGAGAAGALNQWYEADLDAMMARTANRPLPAGRMDRQSALHFGVGLGIFSVLLMGLALNVLAAAILAVSILFYVVVYTIWLKRRTPQNIVIGGAAGAFPALIGWAAATGRVETLPVLLFALVFLWTPPHFWALALFINSDYARAGVPMLPAVAGQRATRIQIMLYTVPMVIAAVAPWAMGLTGAIYGIGASLLSALFLLLAAQVGFSREADPARMKAERRLFGFSILYLFLIFGLVVADKVLA</sequence>
<protein>
    <recommendedName>
        <fullName evidence="1">Protoheme IX farnesyltransferase</fullName>
        <ecNumber evidence="1">2.5.1.141</ecNumber>
    </recommendedName>
    <alternativeName>
        <fullName evidence="1">Heme B farnesyltransferase</fullName>
    </alternativeName>
    <alternativeName>
        <fullName evidence="1">Heme O synthase</fullName>
    </alternativeName>
</protein>
<organism>
    <name type="scientific">Rhizorhabdus wittichii (strain DSM 6014 / CCUG 31198 / JCM 15750 / NBRC 105917 / EY 4224 / RW1)</name>
    <name type="common">Sphingomonas wittichii</name>
    <dbReference type="NCBI Taxonomy" id="392499"/>
    <lineage>
        <taxon>Bacteria</taxon>
        <taxon>Pseudomonadati</taxon>
        <taxon>Pseudomonadota</taxon>
        <taxon>Alphaproteobacteria</taxon>
        <taxon>Sphingomonadales</taxon>
        <taxon>Sphingomonadaceae</taxon>
        <taxon>Rhizorhabdus</taxon>
    </lineage>
</organism>
<keyword id="KW-0997">Cell inner membrane</keyword>
<keyword id="KW-1003">Cell membrane</keyword>
<keyword id="KW-0350">Heme biosynthesis</keyword>
<keyword id="KW-0472">Membrane</keyword>
<keyword id="KW-1185">Reference proteome</keyword>
<keyword id="KW-0808">Transferase</keyword>
<keyword id="KW-0812">Transmembrane</keyword>
<keyword id="KW-1133">Transmembrane helix</keyword>
<gene>
    <name evidence="1" type="primary">ctaB</name>
    <name type="ordered locus">Swit_3877</name>
</gene>
<feature type="chain" id="PRO_0000346073" description="Protoheme IX farnesyltransferase">
    <location>
        <begin position="1"/>
        <end position="302"/>
    </location>
</feature>
<feature type="transmembrane region" description="Helical" evidence="1">
    <location>
        <begin position="27"/>
        <end position="47"/>
    </location>
</feature>
<feature type="transmembrane region" description="Helical" evidence="1">
    <location>
        <begin position="48"/>
        <end position="68"/>
    </location>
</feature>
<feature type="transmembrane region" description="Helical" evidence="1">
    <location>
        <begin position="97"/>
        <end position="117"/>
    </location>
</feature>
<feature type="transmembrane region" description="Helical" evidence="1">
    <location>
        <begin position="119"/>
        <end position="139"/>
    </location>
</feature>
<feature type="transmembrane region" description="Helical" evidence="1">
    <location>
        <begin position="148"/>
        <end position="168"/>
    </location>
</feature>
<feature type="transmembrane region" description="Helical" evidence="1">
    <location>
        <begin position="176"/>
        <end position="196"/>
    </location>
</feature>
<feature type="transmembrane region" description="Helical" evidence="1">
    <location>
        <begin position="219"/>
        <end position="239"/>
    </location>
</feature>
<feature type="transmembrane region" description="Helical" evidence="1">
    <location>
        <begin position="240"/>
        <end position="260"/>
    </location>
</feature>
<feature type="transmembrane region" description="Helical" evidence="1">
    <location>
        <begin position="280"/>
        <end position="300"/>
    </location>
</feature>
<reference key="1">
    <citation type="journal article" date="2010" name="J. Bacteriol.">
        <title>Genome sequence of the dioxin-mineralizing bacterium Sphingomonas wittichii RW1.</title>
        <authorList>
            <person name="Miller T.R."/>
            <person name="Delcher A.L."/>
            <person name="Salzberg S.L."/>
            <person name="Saunders E."/>
            <person name="Detter J.C."/>
            <person name="Halden R.U."/>
        </authorList>
    </citation>
    <scope>NUCLEOTIDE SEQUENCE [LARGE SCALE GENOMIC DNA]</scope>
    <source>
        <strain>DSM 6014 / CCUG 31198 / JCM 15750 / NBRC 105917 / EY 4224 / RW1</strain>
    </source>
</reference>